<keyword id="KW-0067">ATP-binding</keyword>
<keyword id="KW-0418">Kinase</keyword>
<keyword id="KW-0441">Lipid A biosynthesis</keyword>
<keyword id="KW-0444">Lipid biosynthesis</keyword>
<keyword id="KW-0443">Lipid metabolism</keyword>
<keyword id="KW-0547">Nucleotide-binding</keyword>
<keyword id="KW-1185">Reference proteome</keyword>
<keyword id="KW-0808">Transferase</keyword>
<sequence>MKQVLLKAWRARGWLARLLWPVAQLHGLLVRLRRALYRRGMLSSERFKVPVIVVGNVVAGGAGKTPLVMALVKHFQAQGLRVGVVSRGYGRSGHESLEVRPGTPVDESGDEPALIQHATGAPVFVAQRRTQALRDLLAAYPATAVVVCDDGLQHYALQRDIEIAVFDDRGVGNGWLLPAGPLREPWPERLRQGVDLVLHTGQQPAFEGYTSRRQLADHAVAADGSSLALTALAHQPVVALAGIASPEAFFDMLRARGLTLQKTLALPDHHDFKTGDLNALAGRTVLCTEKDAVKLFALPDHSKIKLLAVPLEFSPEPAFFTALDGLLTPLLSQLPSSHGHQTT</sequence>
<name>LPXK_POLNA</name>
<gene>
    <name evidence="1" type="primary">lpxK</name>
    <name type="ordered locus">Pnap_1923</name>
</gene>
<feature type="chain" id="PRO_0000291222" description="Tetraacyldisaccharide 4'-kinase">
    <location>
        <begin position="1"/>
        <end position="343"/>
    </location>
</feature>
<feature type="binding site" evidence="1">
    <location>
        <begin position="58"/>
        <end position="65"/>
    </location>
    <ligand>
        <name>ATP</name>
        <dbReference type="ChEBI" id="CHEBI:30616"/>
    </ligand>
</feature>
<accession>A1VNK5</accession>
<protein>
    <recommendedName>
        <fullName evidence="1">Tetraacyldisaccharide 4'-kinase</fullName>
        <ecNumber evidence="1">2.7.1.130</ecNumber>
    </recommendedName>
    <alternativeName>
        <fullName evidence="1">Lipid A 4'-kinase</fullName>
    </alternativeName>
</protein>
<comment type="function">
    <text evidence="1">Transfers the gamma-phosphate of ATP to the 4'-position of a tetraacyldisaccharide 1-phosphate intermediate (termed DS-1-P) to form tetraacyldisaccharide 1,4'-bis-phosphate (lipid IVA).</text>
</comment>
<comment type="catalytic activity">
    <reaction evidence="1">
        <text>a lipid A disaccharide + ATP = a lipid IVA + ADP + H(+)</text>
        <dbReference type="Rhea" id="RHEA:67840"/>
        <dbReference type="ChEBI" id="CHEBI:15378"/>
        <dbReference type="ChEBI" id="CHEBI:30616"/>
        <dbReference type="ChEBI" id="CHEBI:176343"/>
        <dbReference type="ChEBI" id="CHEBI:176425"/>
        <dbReference type="ChEBI" id="CHEBI:456216"/>
        <dbReference type="EC" id="2.7.1.130"/>
    </reaction>
</comment>
<comment type="pathway">
    <text evidence="1">Glycolipid biosynthesis; lipid IV(A) biosynthesis; lipid IV(A) from (3R)-3-hydroxytetradecanoyl-[acyl-carrier-protein] and UDP-N-acetyl-alpha-D-glucosamine: step 6/6.</text>
</comment>
<comment type="similarity">
    <text evidence="1">Belongs to the LpxK family.</text>
</comment>
<proteinExistence type="inferred from homology"/>
<evidence type="ECO:0000255" key="1">
    <source>
        <dbReference type="HAMAP-Rule" id="MF_00409"/>
    </source>
</evidence>
<dbReference type="EC" id="2.7.1.130" evidence="1"/>
<dbReference type="EMBL" id="CP000529">
    <property type="protein sequence ID" value="ABM37233.1"/>
    <property type="molecule type" value="Genomic_DNA"/>
</dbReference>
<dbReference type="RefSeq" id="WP_011801314.1">
    <property type="nucleotide sequence ID" value="NC_008781.1"/>
</dbReference>
<dbReference type="SMR" id="A1VNK5"/>
<dbReference type="STRING" id="365044.Pnap_1923"/>
<dbReference type="KEGG" id="pna:Pnap_1923"/>
<dbReference type="eggNOG" id="COG1663">
    <property type="taxonomic scope" value="Bacteria"/>
</dbReference>
<dbReference type="HOGENOM" id="CLU_038816_2_0_4"/>
<dbReference type="OrthoDB" id="9766423at2"/>
<dbReference type="UniPathway" id="UPA00359">
    <property type="reaction ID" value="UER00482"/>
</dbReference>
<dbReference type="Proteomes" id="UP000000644">
    <property type="component" value="Chromosome"/>
</dbReference>
<dbReference type="GO" id="GO:0005886">
    <property type="term" value="C:plasma membrane"/>
    <property type="evidence" value="ECO:0007669"/>
    <property type="project" value="TreeGrafter"/>
</dbReference>
<dbReference type="GO" id="GO:0005524">
    <property type="term" value="F:ATP binding"/>
    <property type="evidence" value="ECO:0007669"/>
    <property type="project" value="UniProtKB-UniRule"/>
</dbReference>
<dbReference type="GO" id="GO:0009029">
    <property type="term" value="F:tetraacyldisaccharide 4'-kinase activity"/>
    <property type="evidence" value="ECO:0007669"/>
    <property type="project" value="UniProtKB-UniRule"/>
</dbReference>
<dbReference type="GO" id="GO:0009245">
    <property type="term" value="P:lipid A biosynthetic process"/>
    <property type="evidence" value="ECO:0007669"/>
    <property type="project" value="UniProtKB-UniRule"/>
</dbReference>
<dbReference type="GO" id="GO:0009244">
    <property type="term" value="P:lipopolysaccharide core region biosynthetic process"/>
    <property type="evidence" value="ECO:0007669"/>
    <property type="project" value="TreeGrafter"/>
</dbReference>
<dbReference type="HAMAP" id="MF_00409">
    <property type="entry name" value="LpxK"/>
    <property type="match status" value="1"/>
</dbReference>
<dbReference type="InterPro" id="IPR003758">
    <property type="entry name" value="LpxK"/>
</dbReference>
<dbReference type="InterPro" id="IPR027417">
    <property type="entry name" value="P-loop_NTPase"/>
</dbReference>
<dbReference type="NCBIfam" id="TIGR00682">
    <property type="entry name" value="lpxK"/>
    <property type="match status" value="1"/>
</dbReference>
<dbReference type="PANTHER" id="PTHR42724">
    <property type="entry name" value="TETRAACYLDISACCHARIDE 4'-KINASE"/>
    <property type="match status" value="1"/>
</dbReference>
<dbReference type="PANTHER" id="PTHR42724:SF1">
    <property type="entry name" value="TETRAACYLDISACCHARIDE 4'-KINASE, MITOCHONDRIAL-RELATED"/>
    <property type="match status" value="1"/>
</dbReference>
<dbReference type="Pfam" id="PF02606">
    <property type="entry name" value="LpxK"/>
    <property type="match status" value="1"/>
</dbReference>
<dbReference type="SUPFAM" id="SSF52540">
    <property type="entry name" value="P-loop containing nucleoside triphosphate hydrolases"/>
    <property type="match status" value="1"/>
</dbReference>
<reference key="1">
    <citation type="journal article" date="2009" name="Environ. Microbiol.">
        <title>The genome of Polaromonas naphthalenivorans strain CJ2, isolated from coal tar-contaminated sediment, reveals physiological and metabolic versatility and evolution through extensive horizontal gene transfer.</title>
        <authorList>
            <person name="Yagi J.M."/>
            <person name="Sims D."/>
            <person name="Brettin T."/>
            <person name="Bruce D."/>
            <person name="Madsen E.L."/>
        </authorList>
    </citation>
    <scope>NUCLEOTIDE SEQUENCE [LARGE SCALE GENOMIC DNA]</scope>
    <source>
        <strain>CJ2</strain>
    </source>
</reference>
<organism>
    <name type="scientific">Polaromonas naphthalenivorans (strain CJ2)</name>
    <dbReference type="NCBI Taxonomy" id="365044"/>
    <lineage>
        <taxon>Bacteria</taxon>
        <taxon>Pseudomonadati</taxon>
        <taxon>Pseudomonadota</taxon>
        <taxon>Betaproteobacteria</taxon>
        <taxon>Burkholderiales</taxon>
        <taxon>Comamonadaceae</taxon>
        <taxon>Polaromonas</taxon>
    </lineage>
</organism>